<keyword id="KW-0238">DNA-binding</keyword>
<keyword id="KW-0446">Lipid-binding</keyword>
<keyword id="KW-0479">Metal-binding</keyword>
<keyword id="KW-0539">Nucleus</keyword>
<keyword id="KW-0675">Receptor</keyword>
<keyword id="KW-1185">Reference proteome</keyword>
<keyword id="KW-0754">Steroid-binding</keyword>
<keyword id="KW-0804">Transcription</keyword>
<keyword id="KW-0805">Transcription regulation</keyword>
<keyword id="KW-0862">Zinc</keyword>
<keyword id="KW-0863">Zinc-finger</keyword>
<evidence type="ECO:0000250" key="1"/>
<evidence type="ECO:0000255" key="2">
    <source>
        <dbReference type="PROSITE-ProRule" id="PRU00407"/>
    </source>
</evidence>
<evidence type="ECO:0000255" key="3">
    <source>
        <dbReference type="PROSITE-ProRule" id="PRU01189"/>
    </source>
</evidence>
<evidence type="ECO:0000256" key="4">
    <source>
        <dbReference type="SAM" id="MobiDB-lite"/>
    </source>
</evidence>
<evidence type="ECO:0000305" key="5"/>
<comment type="function">
    <text>The steroid hormones and their receptors are involved in the regulation of eukaryotic gene expression and affect cellular proliferation and differentiation in target tissues.</text>
</comment>
<comment type="subunit">
    <text evidence="1">Binds DNA as a homodimer. Can form a heterodimer with ER-beta (By similarity).</text>
</comment>
<comment type="subcellular location">
    <subcellularLocation>
        <location>Nucleus</location>
    </subcellularLocation>
</comment>
<comment type="domain">
    <text>Composed of three domains: a modulating N-terminal domain, a DNA-binding domain and a C-terminal ligand-binding domain.</text>
</comment>
<comment type="similarity">
    <text evidence="5">Belongs to the nuclear hormone receptor family. NR3 subfamily.</text>
</comment>
<protein>
    <recommendedName>
        <fullName>Estrogen receptor</fullName>
        <shortName>ER</shortName>
    </recommendedName>
    <alternativeName>
        <fullName>ER-alpha</fullName>
    </alternativeName>
    <alternativeName>
        <fullName>Estradiol receptor</fullName>
    </alternativeName>
    <alternativeName>
        <fullName>Nuclear receptor subfamily 3 group A member 1</fullName>
    </alternativeName>
</protein>
<gene>
    <name type="primary">esr1</name>
    <name type="synonym">esr</name>
    <name type="synonym">nr3a1</name>
</gene>
<sequence>MYPEDSRVSGGVATVDFLEGTYDYAAPTPAPTPLYSHSTPGYYSAPLDAHGPPSDGSLQSLGSGPNSPLVFVPSSPHLSPFMHPPTHHYLETTSTPIYRSSVPSSQHSVSREDQCGTSDDSYSVGESGAGAGAAGFEMAKEMRFCAVCSDYASGYHYGVWSCEGCKAFFKRSIQGHNDYMCPATNQCTIDRNRRKSCQACRLRKCYEVGMMKGGVRKDRGRVLRRDKRRTGTSDRDKASKGLEHRTAPPQDRRKHISSSAGGGGGKSSVISMPPDQVLLLLRGAEPPMLCSRQKVNRPYTEVTVMTLLTSMADKELVHMIAWAKKLPGFLQLSLHDQVQLLESSWLEVLMIGLIWRSIHCPGKLIFAQDLILDRSEGDCVEGMAEIFDMLLATASRFRMLKLKPEEFVCLKAIILLNSGAFSFCTGTMEPLHDSAAVQNMLDTITDALIHHINQSGCSAQQQSRRQAQLLLLLSHIRHMSNKGMEHLYSMKCKNKVPLYDLLLEMLDAHRVHRPDRPAETWSQADREPLFTSRNSSSSSGGGGGGSSSAGSTSGPQVNLESPTGPGVLQLRVHPHPMKPTE</sequence>
<organism>
    <name type="scientific">Sparus aurata</name>
    <name type="common">Gilthead sea bream</name>
    <dbReference type="NCBI Taxonomy" id="8175"/>
    <lineage>
        <taxon>Eukaryota</taxon>
        <taxon>Metazoa</taxon>
        <taxon>Chordata</taxon>
        <taxon>Craniata</taxon>
        <taxon>Vertebrata</taxon>
        <taxon>Euteleostomi</taxon>
        <taxon>Actinopterygii</taxon>
        <taxon>Neopterygii</taxon>
        <taxon>Teleostei</taxon>
        <taxon>Neoteleostei</taxon>
        <taxon>Acanthomorphata</taxon>
        <taxon>Eupercaria</taxon>
        <taxon>Spariformes</taxon>
        <taxon>Sparidae</taxon>
        <taxon>Sparus</taxon>
    </lineage>
</organism>
<accession>Q9PVZ9</accession>
<accession>O42174</accession>
<accession>Q9PWP6</accession>
<name>ESR1_SPAAU</name>
<feature type="chain" id="PRO_0000053638" description="Estrogen receptor">
    <location>
        <begin position="1"/>
        <end position="581"/>
    </location>
</feature>
<feature type="domain" description="NR LBD" evidence="3">
    <location>
        <begin position="273"/>
        <end position="509"/>
    </location>
</feature>
<feature type="DNA-binding region" description="Nuclear receptor" evidence="2">
    <location>
        <begin position="142"/>
        <end position="217"/>
    </location>
</feature>
<feature type="zinc finger region" description="NR C4-type" evidence="2">
    <location>
        <begin position="145"/>
        <end position="165"/>
    </location>
</feature>
<feature type="zinc finger region" description="NR C4-type" evidence="2">
    <location>
        <begin position="181"/>
        <end position="200"/>
    </location>
</feature>
<feature type="region of interest" description="Modulating" evidence="1">
    <location>
        <begin position="1"/>
        <end position="144"/>
    </location>
</feature>
<feature type="region of interest" description="Disordered" evidence="4">
    <location>
        <begin position="45"/>
        <end position="66"/>
    </location>
</feature>
<feature type="region of interest" description="Disordered" evidence="4">
    <location>
        <begin position="99"/>
        <end position="123"/>
    </location>
</feature>
<feature type="region of interest" description="Hinge">
    <location>
        <begin position="211"/>
        <end position="272"/>
    </location>
</feature>
<feature type="region of interest" description="Disordered" evidence="4">
    <location>
        <begin position="216"/>
        <end position="269"/>
    </location>
</feature>
<feature type="region of interest" description="Disordered" evidence="4">
    <location>
        <begin position="514"/>
        <end position="581"/>
    </location>
</feature>
<feature type="compositionally biased region" description="Polar residues" evidence="4">
    <location>
        <begin position="56"/>
        <end position="66"/>
    </location>
</feature>
<feature type="compositionally biased region" description="Basic and acidic residues" evidence="4">
    <location>
        <begin position="216"/>
        <end position="246"/>
    </location>
</feature>
<feature type="compositionally biased region" description="Basic and acidic residues" evidence="4">
    <location>
        <begin position="514"/>
        <end position="528"/>
    </location>
</feature>
<feature type="compositionally biased region" description="Basic residues" evidence="4">
    <location>
        <begin position="572"/>
        <end position="581"/>
    </location>
</feature>
<feature type="sequence conflict" description="In Ref. 1; CAB51479." evidence="5" ref="1">
    <original>HPPT</original>
    <variation>QPAN</variation>
    <location>
        <begin position="83"/>
        <end position="86"/>
    </location>
</feature>
<feature type="sequence conflict" description="In Ref. 1; CAB51479." evidence="5" ref="1">
    <location>
        <begin position="99"/>
        <end position="100"/>
    </location>
</feature>
<feature type="sequence conflict" description="In Ref. 4; AAB82428." evidence="5" ref="4">
    <original>K</original>
    <variation>N</variation>
    <location>
        <position position="482"/>
    </location>
</feature>
<proteinExistence type="evidence at transcript level"/>
<dbReference type="EMBL" id="AJ006039">
    <property type="protein sequence ID" value="CAB51479.1"/>
    <property type="molecule type" value="mRNA"/>
</dbReference>
<dbReference type="EMBL" id="AF136979">
    <property type="protein sequence ID" value="AAD31032.2"/>
    <property type="molecule type" value="mRNA"/>
</dbReference>
<dbReference type="EMBL" id="AF013104">
    <property type="protein sequence ID" value="AAB82428.1"/>
    <property type="molecule type" value="mRNA"/>
</dbReference>
<dbReference type="SMR" id="Q9PVZ9"/>
<dbReference type="FunCoup" id="Q9PVZ9">
    <property type="interactions" value="847"/>
</dbReference>
<dbReference type="InParanoid" id="Q9PVZ9"/>
<dbReference type="Proteomes" id="UP000472265">
    <property type="component" value="Unplaced"/>
</dbReference>
<dbReference type="GO" id="GO:0005634">
    <property type="term" value="C:nucleus"/>
    <property type="evidence" value="ECO:0000250"/>
    <property type="project" value="UniProtKB"/>
</dbReference>
<dbReference type="GO" id="GO:0042562">
    <property type="term" value="F:hormone binding"/>
    <property type="evidence" value="ECO:0007669"/>
    <property type="project" value="UniProtKB-ARBA"/>
</dbReference>
<dbReference type="GO" id="GO:0030284">
    <property type="term" value="F:nuclear estrogen receptor activity"/>
    <property type="evidence" value="ECO:0007669"/>
    <property type="project" value="InterPro"/>
</dbReference>
<dbReference type="GO" id="GO:0043565">
    <property type="term" value="F:sequence-specific DNA binding"/>
    <property type="evidence" value="ECO:0007669"/>
    <property type="project" value="InterPro"/>
</dbReference>
<dbReference type="GO" id="GO:0005496">
    <property type="term" value="F:steroid binding"/>
    <property type="evidence" value="ECO:0007669"/>
    <property type="project" value="UniProtKB-KW"/>
</dbReference>
<dbReference type="GO" id="GO:0008270">
    <property type="term" value="F:zinc ion binding"/>
    <property type="evidence" value="ECO:0007669"/>
    <property type="project" value="UniProtKB-KW"/>
</dbReference>
<dbReference type="CDD" id="cd07171">
    <property type="entry name" value="NR_DBD_ER"/>
    <property type="match status" value="1"/>
</dbReference>
<dbReference type="FunFam" id="1.10.565.10:FF:000010">
    <property type="entry name" value="Estrogen receptor"/>
    <property type="match status" value="1"/>
</dbReference>
<dbReference type="FunFam" id="3.30.50.10:FF:000014">
    <property type="entry name" value="Estrogen receptor beta"/>
    <property type="match status" value="1"/>
</dbReference>
<dbReference type="Gene3D" id="3.30.50.10">
    <property type="entry name" value="Erythroid Transcription Factor GATA-1, subunit A"/>
    <property type="match status" value="1"/>
</dbReference>
<dbReference type="Gene3D" id="1.10.565.10">
    <property type="entry name" value="Retinoid X Receptor"/>
    <property type="match status" value="1"/>
</dbReference>
<dbReference type="InterPro" id="IPR024178">
    <property type="entry name" value="Est_rcpt/est-rel_rcp"/>
</dbReference>
<dbReference type="InterPro" id="IPR001292">
    <property type="entry name" value="Estr_rcpt"/>
</dbReference>
<dbReference type="InterPro" id="IPR046944">
    <property type="entry name" value="Estr_rcpt_N"/>
</dbReference>
<dbReference type="InterPro" id="IPR035500">
    <property type="entry name" value="NHR-like_dom_sf"/>
</dbReference>
<dbReference type="InterPro" id="IPR000536">
    <property type="entry name" value="Nucl_hrmn_rcpt_lig-bd"/>
</dbReference>
<dbReference type="InterPro" id="IPR050200">
    <property type="entry name" value="Nuclear_hormone_rcpt_NR3"/>
</dbReference>
<dbReference type="InterPro" id="IPR001723">
    <property type="entry name" value="Nuclear_hrmn_rcpt"/>
</dbReference>
<dbReference type="InterPro" id="IPR001628">
    <property type="entry name" value="Znf_hrmn_rcpt"/>
</dbReference>
<dbReference type="InterPro" id="IPR013088">
    <property type="entry name" value="Znf_NHR/GATA"/>
</dbReference>
<dbReference type="PANTHER" id="PTHR48092">
    <property type="entry name" value="KNIRPS-RELATED PROTEIN-RELATED"/>
    <property type="match status" value="1"/>
</dbReference>
<dbReference type="Pfam" id="PF00104">
    <property type="entry name" value="Hormone_recep"/>
    <property type="match status" value="1"/>
</dbReference>
<dbReference type="Pfam" id="PF02159">
    <property type="entry name" value="Oest_recep"/>
    <property type="match status" value="1"/>
</dbReference>
<dbReference type="Pfam" id="PF00105">
    <property type="entry name" value="zf-C4"/>
    <property type="match status" value="1"/>
</dbReference>
<dbReference type="PIRSF" id="PIRSF500101">
    <property type="entry name" value="ER-a"/>
    <property type="match status" value="1"/>
</dbReference>
<dbReference type="PIRSF" id="PIRSF002527">
    <property type="entry name" value="ER-like_NR"/>
    <property type="match status" value="1"/>
</dbReference>
<dbReference type="PRINTS" id="PR00398">
    <property type="entry name" value="STRDHORMONER"/>
</dbReference>
<dbReference type="PRINTS" id="PR00047">
    <property type="entry name" value="STROIDFINGER"/>
</dbReference>
<dbReference type="SMART" id="SM00430">
    <property type="entry name" value="HOLI"/>
    <property type="match status" value="1"/>
</dbReference>
<dbReference type="SMART" id="SM00399">
    <property type="entry name" value="ZnF_C4"/>
    <property type="match status" value="1"/>
</dbReference>
<dbReference type="SUPFAM" id="SSF57716">
    <property type="entry name" value="Glucocorticoid receptor-like (DNA-binding domain)"/>
    <property type="match status" value="1"/>
</dbReference>
<dbReference type="SUPFAM" id="SSF48508">
    <property type="entry name" value="Nuclear receptor ligand-binding domain"/>
    <property type="match status" value="1"/>
</dbReference>
<dbReference type="PROSITE" id="PS51843">
    <property type="entry name" value="NR_LBD"/>
    <property type="match status" value="1"/>
</dbReference>
<dbReference type="PROSITE" id="PS00031">
    <property type="entry name" value="NUCLEAR_REC_DBD_1"/>
    <property type="match status" value="1"/>
</dbReference>
<dbReference type="PROSITE" id="PS51030">
    <property type="entry name" value="NUCLEAR_REC_DBD_2"/>
    <property type="match status" value="1"/>
</dbReference>
<reference key="1">
    <citation type="journal article" date="1999" name="DNA Seq.">
        <title>Cloning and sequencing of the gilthead sea bream estrogen receptor cDNA.</title>
        <authorList>
            <person name="Munoz-Cueto J.A."/>
            <person name="Burzawa-Gerard E."/>
            <person name="Kah O."/>
            <person name="Valotaire Y."/>
            <person name="Pakdel F."/>
        </authorList>
    </citation>
    <scope>NUCLEOTIDE SEQUENCE [MRNA]</scope>
    <source>
        <tissue>Liver</tissue>
    </source>
</reference>
<reference key="2">
    <citation type="submission" date="2006-01" db="EMBL/GenBank/DDBJ databases">
        <title>The estrogen receptor in sea bream (Sparus auratus) reproduction: diversity, expression, mechanisms and physiological actions.</title>
        <authorList>
            <person name="Pinto P."/>
            <person name="Canario A.V.M."/>
        </authorList>
    </citation>
    <scope>NUCLEOTIDE SEQUENCE [MRNA]</scope>
</reference>
<reference key="3">
    <citation type="journal article" date="2000" name="J. Endocrinol.">
        <title>Two estrogen receptors expressed in the teleost fish, Sparus aurata: cDNA cloning, characterization and tissue distribution.</title>
        <authorList>
            <person name="Socorro S."/>
            <person name="Power D.M."/>
            <person name="Olsson P.-E."/>
            <person name="Canario A.V.M."/>
        </authorList>
    </citation>
    <scope>NUCLEOTIDE SEQUENCE [MRNA] OF 52-581</scope>
    <source>
        <tissue>Liver</tissue>
    </source>
</reference>
<reference key="4">
    <citation type="submission" date="1997-07" db="EMBL/GenBank/DDBJ databases">
        <title>cDNA cloning and tissue expression of the gilthead sea-bream, Sparus aurata, estrogen receptor.</title>
        <authorList>
            <person name="Socorro S."/>
            <person name="Power D.M."/>
            <person name="Canario A.V.M."/>
        </authorList>
    </citation>
    <scope>NUCLEOTIDE SEQUENCE [MRNA] OF 210-485</scope>
    <source>
        <tissue>Liver</tissue>
    </source>
</reference>